<accession>P12863</accession>
<organism>
    <name type="scientific">Zea mays</name>
    <name type="common">Maize</name>
    <dbReference type="NCBI Taxonomy" id="4577"/>
    <lineage>
        <taxon>Eukaryota</taxon>
        <taxon>Viridiplantae</taxon>
        <taxon>Streptophyta</taxon>
        <taxon>Embryophyta</taxon>
        <taxon>Tracheophyta</taxon>
        <taxon>Spermatophyta</taxon>
        <taxon>Magnoliopsida</taxon>
        <taxon>Liliopsida</taxon>
        <taxon>Poales</taxon>
        <taxon>Poaceae</taxon>
        <taxon>PACMAD clade</taxon>
        <taxon>Panicoideae</taxon>
        <taxon>Andropogonodae</taxon>
        <taxon>Andropogoneae</taxon>
        <taxon>Tripsacinae</taxon>
        <taxon>Zea</taxon>
    </lineage>
</organism>
<comment type="catalytic activity">
    <reaction>
        <text>D-glyceraldehyde 3-phosphate = dihydroxyacetone phosphate</text>
        <dbReference type="Rhea" id="RHEA:18585"/>
        <dbReference type="ChEBI" id="CHEBI:57642"/>
        <dbReference type="ChEBI" id="CHEBI:59776"/>
        <dbReference type="EC" id="5.3.1.1"/>
    </reaction>
</comment>
<comment type="pathway">
    <text>Carbohydrate biosynthesis; gluconeogenesis.</text>
</comment>
<comment type="pathway">
    <text>Carbohydrate degradation; glycolysis; D-glyceraldehyde 3-phosphate from glycerone phosphate: step 1/1.</text>
</comment>
<comment type="subunit">
    <text>Homodimer.</text>
</comment>
<comment type="subcellular location">
    <subcellularLocation>
        <location evidence="2">Cytoplasm</location>
    </subcellularLocation>
</comment>
<comment type="miscellaneous">
    <text>In plants, there are two types of TPIS, cytosolic and plastid.</text>
</comment>
<comment type="similarity">
    <text evidence="2">Belongs to the triosephosphate isomerase family.</text>
</comment>
<keyword id="KW-0002">3D-structure</keyword>
<keyword id="KW-0963">Cytoplasm</keyword>
<keyword id="KW-0312">Gluconeogenesis</keyword>
<keyword id="KW-0324">Glycolysis</keyword>
<keyword id="KW-0413">Isomerase</keyword>
<keyword id="KW-1185">Reference proteome</keyword>
<reference key="1">
    <citation type="journal article" date="1986" name="Cell">
        <title>The triosephosphate isomerase gene from maize: introns antedate the plant-animal divergence.</title>
        <authorList>
            <person name="Marchionni M."/>
            <person name="Gilbert W."/>
        </authorList>
    </citation>
    <scope>NUCLEOTIDE SEQUENCE [GENOMIC DNA]</scope>
</reference>
<protein>
    <recommendedName>
        <fullName>Triosephosphate isomerase, cytosolic</fullName>
        <shortName>TIM</shortName>
        <shortName>Triose-phosphate isomerase</shortName>
        <ecNumber>5.3.1.1</ecNumber>
    </recommendedName>
</protein>
<feature type="initiator methionine" description="Removed">
    <location>
        <position position="1"/>
    </location>
</feature>
<feature type="chain" id="PRO_0000090149" description="Triosephosphate isomerase, cytosolic">
    <location>
        <begin position="2"/>
        <end position="253"/>
    </location>
</feature>
<feature type="active site" description="Electrophile" evidence="1">
    <location>
        <position position="96"/>
    </location>
</feature>
<feature type="active site" description="Proton acceptor" evidence="1">
    <location>
        <position position="166"/>
    </location>
</feature>
<feature type="binding site" evidence="1">
    <location>
        <position position="10"/>
    </location>
    <ligand>
        <name>substrate</name>
    </ligand>
</feature>
<feature type="binding site" evidence="1">
    <location>
        <position position="12"/>
    </location>
    <ligand>
        <name>substrate</name>
    </ligand>
</feature>
<feature type="strand" evidence="3">
    <location>
        <begin position="5"/>
        <end position="10"/>
    </location>
</feature>
<feature type="helix" evidence="3">
    <location>
        <begin position="17"/>
        <end position="29"/>
    </location>
</feature>
<feature type="turn" evidence="3">
    <location>
        <begin position="35"/>
        <end position="37"/>
    </location>
</feature>
<feature type="strand" evidence="3">
    <location>
        <begin position="38"/>
        <end position="43"/>
    </location>
</feature>
<feature type="helix" evidence="3">
    <location>
        <begin position="46"/>
        <end position="48"/>
    </location>
</feature>
<feature type="helix" evidence="3">
    <location>
        <begin position="49"/>
        <end position="55"/>
    </location>
</feature>
<feature type="strand" evidence="3">
    <location>
        <begin position="60"/>
        <end position="65"/>
    </location>
</feature>
<feature type="helix" evidence="3">
    <location>
        <begin position="81"/>
        <end position="87"/>
    </location>
</feature>
<feature type="strand" evidence="3">
    <location>
        <begin position="91"/>
        <end position="95"/>
    </location>
</feature>
<feature type="helix" evidence="3">
    <location>
        <begin position="97"/>
        <end position="102"/>
    </location>
</feature>
<feature type="helix" evidence="3">
    <location>
        <begin position="107"/>
        <end position="119"/>
    </location>
</feature>
<feature type="strand" evidence="3">
    <location>
        <begin position="123"/>
        <end position="128"/>
    </location>
</feature>
<feature type="helix" evidence="3">
    <location>
        <begin position="132"/>
        <end position="136"/>
    </location>
</feature>
<feature type="helix" evidence="3">
    <location>
        <begin position="140"/>
        <end position="152"/>
    </location>
</feature>
<feature type="strand" evidence="3">
    <location>
        <begin position="161"/>
        <end position="165"/>
    </location>
</feature>
<feature type="helix" evidence="3">
    <location>
        <begin position="168"/>
        <end position="170"/>
    </location>
</feature>
<feature type="strand" evidence="3">
    <location>
        <begin position="171"/>
        <end position="174"/>
    </location>
</feature>
<feature type="helix" evidence="3">
    <location>
        <begin position="179"/>
        <end position="196"/>
    </location>
</feature>
<feature type="helix" evidence="3">
    <location>
        <begin position="199"/>
        <end position="204"/>
    </location>
</feature>
<feature type="strand" evidence="3">
    <location>
        <begin position="207"/>
        <end position="209"/>
    </location>
</feature>
<feature type="turn" evidence="3">
    <location>
        <begin position="215"/>
        <end position="217"/>
    </location>
</feature>
<feature type="helix" evidence="3">
    <location>
        <begin position="218"/>
        <end position="222"/>
    </location>
</feature>
<feature type="strand" evidence="3">
    <location>
        <begin position="229"/>
        <end position="232"/>
    </location>
</feature>
<feature type="helix" evidence="3">
    <location>
        <begin position="234"/>
        <end position="237"/>
    </location>
</feature>
<feature type="helix" evidence="3">
    <location>
        <begin position="240"/>
        <end position="245"/>
    </location>
</feature>
<feature type="helix" evidence="3">
    <location>
        <begin position="246"/>
        <end position="249"/>
    </location>
</feature>
<dbReference type="EC" id="5.3.1.1"/>
<dbReference type="EMBL" id="D00012">
    <property type="protein sequence ID" value="BAA00009.1"/>
    <property type="molecule type" value="Genomic_DNA"/>
</dbReference>
<dbReference type="EMBL" id="L00371">
    <property type="protein sequence ID" value="AAB81110.1"/>
    <property type="molecule type" value="Genomic_DNA"/>
</dbReference>
<dbReference type="PIR" id="A25501">
    <property type="entry name" value="ISZMT"/>
</dbReference>
<dbReference type="RefSeq" id="NP_001140424.1">
    <property type="nucleotide sequence ID" value="NM_001146952.1"/>
</dbReference>
<dbReference type="PDB" id="6CG9">
    <property type="method" value="X-ray"/>
    <property type="resolution" value="1.80 A"/>
    <property type="chains" value="A/B=1-253"/>
</dbReference>
<dbReference type="PDBsum" id="6CG9"/>
<dbReference type="SMR" id="P12863"/>
<dbReference type="FunCoup" id="P12863">
    <property type="interactions" value="2608"/>
</dbReference>
<dbReference type="STRING" id="4577.P12863"/>
<dbReference type="PaxDb" id="4577-GRMZM2G030784_P02"/>
<dbReference type="EnsemblPlants" id="Zm00001eb124410_T001">
    <property type="protein sequence ID" value="Zm00001eb124410_P001"/>
    <property type="gene ID" value="Zm00001eb124410"/>
</dbReference>
<dbReference type="GeneID" id="100272481"/>
<dbReference type="Gramene" id="Zm00001eb124410_T001">
    <property type="protein sequence ID" value="Zm00001eb124410_P001"/>
    <property type="gene ID" value="Zm00001eb124410"/>
</dbReference>
<dbReference type="KEGG" id="zma:100272481"/>
<dbReference type="MaizeGDB" id="65619"/>
<dbReference type="eggNOG" id="KOG1643">
    <property type="taxonomic scope" value="Eukaryota"/>
</dbReference>
<dbReference type="HOGENOM" id="CLU_024251_2_0_1"/>
<dbReference type="InParanoid" id="P12863"/>
<dbReference type="OrthoDB" id="6715177at2759"/>
<dbReference type="UniPathway" id="UPA00109">
    <property type="reaction ID" value="UER00189"/>
</dbReference>
<dbReference type="UniPathway" id="UPA00138"/>
<dbReference type="Proteomes" id="UP000007305">
    <property type="component" value="Chromosome 3"/>
</dbReference>
<dbReference type="ExpressionAtlas" id="P12863">
    <property type="expression patterns" value="baseline and differential"/>
</dbReference>
<dbReference type="GO" id="GO:0005829">
    <property type="term" value="C:cytosol"/>
    <property type="evidence" value="ECO:0000318"/>
    <property type="project" value="GO_Central"/>
</dbReference>
<dbReference type="GO" id="GO:0004807">
    <property type="term" value="F:triose-phosphate isomerase activity"/>
    <property type="evidence" value="ECO:0000318"/>
    <property type="project" value="GO_Central"/>
</dbReference>
<dbReference type="GO" id="GO:0006094">
    <property type="term" value="P:gluconeogenesis"/>
    <property type="evidence" value="ECO:0000318"/>
    <property type="project" value="GO_Central"/>
</dbReference>
<dbReference type="GO" id="GO:0046166">
    <property type="term" value="P:glyceraldehyde-3-phosphate biosynthetic process"/>
    <property type="evidence" value="ECO:0000318"/>
    <property type="project" value="GO_Central"/>
</dbReference>
<dbReference type="GO" id="GO:0019563">
    <property type="term" value="P:glycerol catabolic process"/>
    <property type="evidence" value="ECO:0000318"/>
    <property type="project" value="GO_Central"/>
</dbReference>
<dbReference type="GO" id="GO:0006096">
    <property type="term" value="P:glycolytic process"/>
    <property type="evidence" value="ECO:0000318"/>
    <property type="project" value="GO_Central"/>
</dbReference>
<dbReference type="CDD" id="cd00311">
    <property type="entry name" value="TIM"/>
    <property type="match status" value="1"/>
</dbReference>
<dbReference type="FunFam" id="3.20.20.70:FF:000025">
    <property type="entry name" value="Triosephosphate isomerase"/>
    <property type="match status" value="1"/>
</dbReference>
<dbReference type="Gene3D" id="3.20.20.70">
    <property type="entry name" value="Aldolase class I"/>
    <property type="match status" value="1"/>
</dbReference>
<dbReference type="HAMAP" id="MF_00147_B">
    <property type="entry name" value="TIM_B"/>
    <property type="match status" value="1"/>
</dbReference>
<dbReference type="InterPro" id="IPR013785">
    <property type="entry name" value="Aldolase_TIM"/>
</dbReference>
<dbReference type="InterPro" id="IPR035990">
    <property type="entry name" value="TIM_sf"/>
</dbReference>
<dbReference type="InterPro" id="IPR022896">
    <property type="entry name" value="TrioseP_Isoase_bac/euk"/>
</dbReference>
<dbReference type="InterPro" id="IPR000652">
    <property type="entry name" value="Triosephosphate_isomerase"/>
</dbReference>
<dbReference type="InterPro" id="IPR020861">
    <property type="entry name" value="Triosephosphate_isomerase_AS"/>
</dbReference>
<dbReference type="NCBIfam" id="TIGR00419">
    <property type="entry name" value="tim"/>
    <property type="match status" value="1"/>
</dbReference>
<dbReference type="PANTHER" id="PTHR21139">
    <property type="entry name" value="TRIOSEPHOSPHATE ISOMERASE"/>
    <property type="match status" value="1"/>
</dbReference>
<dbReference type="PANTHER" id="PTHR21139:SF34">
    <property type="entry name" value="TRIOSEPHOSPHATE ISOMERASE, CYTOSOLIC"/>
    <property type="match status" value="1"/>
</dbReference>
<dbReference type="Pfam" id="PF00121">
    <property type="entry name" value="TIM"/>
    <property type="match status" value="1"/>
</dbReference>
<dbReference type="SUPFAM" id="SSF51351">
    <property type="entry name" value="Triosephosphate isomerase (TIM)"/>
    <property type="match status" value="1"/>
</dbReference>
<dbReference type="PROSITE" id="PS00171">
    <property type="entry name" value="TIM_1"/>
    <property type="match status" value="1"/>
</dbReference>
<dbReference type="PROSITE" id="PS51440">
    <property type="entry name" value="TIM_2"/>
    <property type="match status" value="1"/>
</dbReference>
<evidence type="ECO:0000250" key="1"/>
<evidence type="ECO:0000305" key="2"/>
<evidence type="ECO:0007829" key="3">
    <source>
        <dbReference type="PDB" id="6CG9"/>
    </source>
</evidence>
<proteinExistence type="evidence at protein level"/>
<sequence length="253" mass="27025">MGRKFFVGGNWKCNGTTDQVEKIVKTLNEGQVPPSDVVEVVVSPPYVFLPVVKSQLRQEFHVAAQNCWVKKGGAFTGEVSAEMLVNLGVPWVILGHSERRALLGESNEFVGDKVAYALSQGLKVIACVGETLEQREAGSTMDVVAAQTKAIAEKIKDWSNVVVAYEPVWAIGTGKVATPAQAQEVHASLRDWLKTNASPEVAESTRIIYGGSVTAANCKELAAQPDVDGFLVGGASLKPEFIDIINAATVKSA</sequence>
<name>TPIS_MAIZE</name>